<sequence length="90" mass="10238">MPRSVKKGPFVDHHLVKKVMEAQESGNKRPIKTWSRRSMILPDMIGLTIAVHNGKEHIPVYVSENMVGHKLGEFSMTRTYRGHAADKKSK</sequence>
<proteinExistence type="inferred from homology"/>
<protein>
    <recommendedName>
        <fullName evidence="1">Small ribosomal subunit protein uS19</fullName>
    </recommendedName>
    <alternativeName>
        <fullName evidence="2">30S ribosomal protein S19</fullName>
    </alternativeName>
</protein>
<gene>
    <name evidence="1" type="primary">rpsS</name>
    <name type="ordered locus">Tcr_0299</name>
</gene>
<keyword id="KW-0687">Ribonucleoprotein</keyword>
<keyword id="KW-0689">Ribosomal protein</keyword>
<keyword id="KW-0694">RNA-binding</keyword>
<keyword id="KW-0699">rRNA-binding</keyword>
<dbReference type="EMBL" id="CP000109">
    <property type="protein sequence ID" value="ABB40895.1"/>
    <property type="molecule type" value="Genomic_DNA"/>
</dbReference>
<dbReference type="SMR" id="Q31IX8"/>
<dbReference type="STRING" id="317025.Tcr_0299"/>
<dbReference type="KEGG" id="tcx:Tcr_0299"/>
<dbReference type="eggNOG" id="COG0185">
    <property type="taxonomic scope" value="Bacteria"/>
</dbReference>
<dbReference type="HOGENOM" id="CLU_144911_0_1_6"/>
<dbReference type="OrthoDB" id="9797833at2"/>
<dbReference type="GO" id="GO:0005737">
    <property type="term" value="C:cytoplasm"/>
    <property type="evidence" value="ECO:0007669"/>
    <property type="project" value="UniProtKB-ARBA"/>
</dbReference>
<dbReference type="GO" id="GO:0015935">
    <property type="term" value="C:small ribosomal subunit"/>
    <property type="evidence" value="ECO:0007669"/>
    <property type="project" value="InterPro"/>
</dbReference>
<dbReference type="GO" id="GO:0019843">
    <property type="term" value="F:rRNA binding"/>
    <property type="evidence" value="ECO:0007669"/>
    <property type="project" value="UniProtKB-UniRule"/>
</dbReference>
<dbReference type="GO" id="GO:0003735">
    <property type="term" value="F:structural constituent of ribosome"/>
    <property type="evidence" value="ECO:0007669"/>
    <property type="project" value="InterPro"/>
</dbReference>
<dbReference type="GO" id="GO:0000028">
    <property type="term" value="P:ribosomal small subunit assembly"/>
    <property type="evidence" value="ECO:0007669"/>
    <property type="project" value="TreeGrafter"/>
</dbReference>
<dbReference type="GO" id="GO:0006412">
    <property type="term" value="P:translation"/>
    <property type="evidence" value="ECO:0007669"/>
    <property type="project" value="UniProtKB-UniRule"/>
</dbReference>
<dbReference type="FunFam" id="3.30.860.10:FF:000001">
    <property type="entry name" value="30S ribosomal protein S19"/>
    <property type="match status" value="1"/>
</dbReference>
<dbReference type="Gene3D" id="3.30.860.10">
    <property type="entry name" value="30s Ribosomal Protein S19, Chain A"/>
    <property type="match status" value="1"/>
</dbReference>
<dbReference type="HAMAP" id="MF_00531">
    <property type="entry name" value="Ribosomal_uS19"/>
    <property type="match status" value="1"/>
</dbReference>
<dbReference type="InterPro" id="IPR002222">
    <property type="entry name" value="Ribosomal_uS19"/>
</dbReference>
<dbReference type="InterPro" id="IPR005732">
    <property type="entry name" value="Ribosomal_uS19_bac-type"/>
</dbReference>
<dbReference type="InterPro" id="IPR020934">
    <property type="entry name" value="Ribosomal_uS19_CS"/>
</dbReference>
<dbReference type="InterPro" id="IPR023575">
    <property type="entry name" value="Ribosomal_uS19_SF"/>
</dbReference>
<dbReference type="NCBIfam" id="TIGR01050">
    <property type="entry name" value="rpsS_bact"/>
    <property type="match status" value="1"/>
</dbReference>
<dbReference type="PANTHER" id="PTHR11880">
    <property type="entry name" value="RIBOSOMAL PROTEIN S19P FAMILY MEMBER"/>
    <property type="match status" value="1"/>
</dbReference>
<dbReference type="PANTHER" id="PTHR11880:SF8">
    <property type="entry name" value="SMALL RIBOSOMAL SUBUNIT PROTEIN US19M"/>
    <property type="match status" value="1"/>
</dbReference>
<dbReference type="Pfam" id="PF00203">
    <property type="entry name" value="Ribosomal_S19"/>
    <property type="match status" value="1"/>
</dbReference>
<dbReference type="PIRSF" id="PIRSF002144">
    <property type="entry name" value="Ribosomal_S19"/>
    <property type="match status" value="1"/>
</dbReference>
<dbReference type="PRINTS" id="PR00975">
    <property type="entry name" value="RIBOSOMALS19"/>
</dbReference>
<dbReference type="SUPFAM" id="SSF54570">
    <property type="entry name" value="Ribosomal protein S19"/>
    <property type="match status" value="1"/>
</dbReference>
<dbReference type="PROSITE" id="PS00323">
    <property type="entry name" value="RIBOSOMAL_S19"/>
    <property type="match status" value="1"/>
</dbReference>
<reference key="1">
    <citation type="journal article" date="2006" name="PLoS Biol.">
        <title>The genome of deep-sea vent chemolithoautotroph Thiomicrospira crunogena XCL-2.</title>
        <authorList>
            <person name="Scott K.M."/>
            <person name="Sievert S.M."/>
            <person name="Abril F.N."/>
            <person name="Ball L.A."/>
            <person name="Barrett C.J."/>
            <person name="Blake R.A."/>
            <person name="Boller A.J."/>
            <person name="Chain P.S.G."/>
            <person name="Clark J.A."/>
            <person name="Davis C.R."/>
            <person name="Detter C."/>
            <person name="Do K.F."/>
            <person name="Dobrinski K.P."/>
            <person name="Faza B.I."/>
            <person name="Fitzpatrick K.A."/>
            <person name="Freyermuth S.K."/>
            <person name="Harmer T.L."/>
            <person name="Hauser L.J."/>
            <person name="Huegler M."/>
            <person name="Kerfeld C.A."/>
            <person name="Klotz M.G."/>
            <person name="Kong W.W."/>
            <person name="Land M."/>
            <person name="Lapidus A."/>
            <person name="Larimer F.W."/>
            <person name="Longo D.L."/>
            <person name="Lucas S."/>
            <person name="Malfatti S.A."/>
            <person name="Massey S.E."/>
            <person name="Martin D.D."/>
            <person name="McCuddin Z."/>
            <person name="Meyer F."/>
            <person name="Moore J.L."/>
            <person name="Ocampo L.H. Jr."/>
            <person name="Paul J.H."/>
            <person name="Paulsen I.T."/>
            <person name="Reep D.K."/>
            <person name="Ren Q."/>
            <person name="Ross R.L."/>
            <person name="Sato P.Y."/>
            <person name="Thomas P."/>
            <person name="Tinkham L.E."/>
            <person name="Zeruth G.T."/>
        </authorList>
    </citation>
    <scope>NUCLEOTIDE SEQUENCE [LARGE SCALE GENOMIC DNA]</scope>
    <source>
        <strain>DSM 25203 / XCL-2</strain>
    </source>
</reference>
<feature type="chain" id="PRO_0000265459" description="Small ribosomal subunit protein uS19">
    <location>
        <begin position="1"/>
        <end position="90"/>
    </location>
</feature>
<comment type="function">
    <text evidence="1">Protein S19 forms a complex with S13 that binds strongly to the 16S ribosomal RNA.</text>
</comment>
<comment type="similarity">
    <text evidence="1">Belongs to the universal ribosomal protein uS19 family.</text>
</comment>
<organism>
    <name type="scientific">Hydrogenovibrio crunogenus (strain DSM 25203 / XCL-2)</name>
    <name type="common">Thiomicrospira crunogena</name>
    <dbReference type="NCBI Taxonomy" id="317025"/>
    <lineage>
        <taxon>Bacteria</taxon>
        <taxon>Pseudomonadati</taxon>
        <taxon>Pseudomonadota</taxon>
        <taxon>Gammaproteobacteria</taxon>
        <taxon>Thiotrichales</taxon>
        <taxon>Piscirickettsiaceae</taxon>
        <taxon>Hydrogenovibrio</taxon>
    </lineage>
</organism>
<evidence type="ECO:0000255" key="1">
    <source>
        <dbReference type="HAMAP-Rule" id="MF_00531"/>
    </source>
</evidence>
<evidence type="ECO:0000305" key="2"/>
<accession>Q31IX8</accession>
<name>RS19_HYDCU</name>